<reference key="1">
    <citation type="submission" date="2003-01" db="EMBL/GenBank/DDBJ databases">
        <authorList>
            <consortium name="NIH - Zebrafish Gene Collection (ZGC) project"/>
        </authorList>
    </citation>
    <scope>NUCLEOTIDE SEQUENCE [LARGE SCALE MRNA]</scope>
    <source>
        <strain>AB</strain>
        <tissue>Embryo</tissue>
    </source>
</reference>
<proteinExistence type="evidence at transcript level"/>
<protein>
    <recommendedName>
        <fullName evidence="3">Adenylyltransferase and sulfurtransferase MOCS3</fullName>
    </recommendedName>
    <alternativeName>
        <fullName evidence="3">Molybdenum cofactor synthesis protein 3</fullName>
    </alternativeName>
    <domain>
        <recommendedName>
            <fullName evidence="3">Molybdopterin-synthase adenylyltransferase</fullName>
            <ecNumber evidence="3">2.7.7.80</ecNumber>
        </recommendedName>
        <alternativeName>
            <fullName evidence="3">Adenylyltransferase MOCS3</fullName>
        </alternativeName>
        <alternativeName>
            <fullName evidence="3">Sulfur carrier protein MOCS2A adenylyltransferase</fullName>
        </alternativeName>
    </domain>
    <domain>
        <recommendedName>
            <fullName evidence="3">Molybdopterin-synthase sulfurtransferase</fullName>
            <ecNumber evidence="3">2.8.1.11</ecNumber>
        </recommendedName>
        <alternativeName>
            <fullName evidence="3">Sulfur carrier protein MOCS2A sulfurtransferase</fullName>
        </alternativeName>
        <alternativeName>
            <fullName evidence="3">Sulfurtransferase MOCS3</fullName>
        </alternativeName>
    </domain>
</protein>
<organism>
    <name type="scientific">Danio rerio</name>
    <name type="common">Zebrafish</name>
    <name type="synonym">Brachydanio rerio</name>
    <dbReference type="NCBI Taxonomy" id="7955"/>
    <lineage>
        <taxon>Eukaryota</taxon>
        <taxon>Metazoa</taxon>
        <taxon>Chordata</taxon>
        <taxon>Craniata</taxon>
        <taxon>Vertebrata</taxon>
        <taxon>Euteleostomi</taxon>
        <taxon>Actinopterygii</taxon>
        <taxon>Neopterygii</taxon>
        <taxon>Teleostei</taxon>
        <taxon>Ostariophysi</taxon>
        <taxon>Cypriniformes</taxon>
        <taxon>Danionidae</taxon>
        <taxon>Danioninae</taxon>
        <taxon>Danio</taxon>
    </lineage>
</organism>
<feature type="chain" id="PRO_0000369195" description="Adenylyltransferase and sulfurtransferase MOCS3">
    <location>
        <begin position="1"/>
        <end position="459"/>
    </location>
</feature>
<feature type="domain" description="Rhodanese" evidence="3">
    <location>
        <begin position="347"/>
        <end position="457"/>
    </location>
</feature>
<feature type="active site" description="Glycyl thioester intermediate; for adenylyltransferase activity" evidence="3">
    <location>
        <position position="239"/>
    </location>
</feature>
<feature type="active site" description="Cysteine persulfide intermediate; for sulfurtransferase activity" evidence="3">
    <location>
        <position position="412"/>
    </location>
</feature>
<feature type="binding site" evidence="3">
    <location>
        <position position="92"/>
    </location>
    <ligand>
        <name>ATP</name>
        <dbReference type="ChEBI" id="CHEBI:30616"/>
    </ligand>
</feature>
<feature type="binding site" evidence="3">
    <location>
        <position position="113"/>
    </location>
    <ligand>
        <name>ATP</name>
        <dbReference type="ChEBI" id="CHEBI:30616"/>
    </ligand>
</feature>
<feature type="binding site" evidence="3">
    <location>
        <begin position="120"/>
        <end position="124"/>
    </location>
    <ligand>
        <name>ATP</name>
        <dbReference type="ChEBI" id="CHEBI:30616"/>
    </ligand>
</feature>
<feature type="binding site" evidence="3">
    <location>
        <position position="137"/>
    </location>
    <ligand>
        <name>ATP</name>
        <dbReference type="ChEBI" id="CHEBI:30616"/>
    </ligand>
</feature>
<feature type="binding site" evidence="3">
    <location>
        <begin position="181"/>
        <end position="182"/>
    </location>
    <ligand>
        <name>ATP</name>
        <dbReference type="ChEBI" id="CHEBI:30616"/>
    </ligand>
</feature>
<feature type="binding site" evidence="3">
    <location>
        <position position="222"/>
    </location>
    <ligand>
        <name>Zn(2+)</name>
        <dbReference type="ChEBI" id="CHEBI:29105"/>
    </ligand>
</feature>
<feature type="binding site" evidence="3">
    <location>
        <position position="225"/>
    </location>
    <ligand>
        <name>Zn(2+)</name>
        <dbReference type="ChEBI" id="CHEBI:29105"/>
    </ligand>
</feature>
<feature type="binding site" evidence="3">
    <location>
        <position position="297"/>
    </location>
    <ligand>
        <name>Zn(2+)</name>
        <dbReference type="ChEBI" id="CHEBI:29105"/>
    </ligand>
</feature>
<feature type="binding site" evidence="3">
    <location>
        <position position="300"/>
    </location>
    <ligand>
        <name>Zn(2+)</name>
        <dbReference type="ChEBI" id="CHEBI:29105"/>
    </ligand>
</feature>
<feature type="disulfide bond" description="Alternate" evidence="3">
    <location>
        <begin position="316"/>
        <end position="324"/>
    </location>
</feature>
<feature type="sequence conflict" description="In Ref. 1; AAH71459." evidence="4" ref="1">
    <original>V</original>
    <variation>A</variation>
    <location>
        <position position="176"/>
    </location>
</feature>
<feature type="sequence conflict" description="In Ref. 1; AAH71459." evidence="4" ref="1">
    <original>L</original>
    <variation>P</variation>
    <location>
        <position position="354"/>
    </location>
</feature>
<feature type="sequence conflict" description="In Ref. 1; AAH71459." evidence="4" ref="1">
    <original>G</original>
    <variation>S</variation>
    <location>
        <position position="442"/>
    </location>
</feature>
<feature type="sequence conflict" description="In Ref. 1; AAH71459." evidence="4" ref="1">
    <original>Y</original>
    <variation>H</variation>
    <location>
        <position position="454"/>
    </location>
</feature>
<evidence type="ECO:0000250" key="1"/>
<evidence type="ECO:0000250" key="2">
    <source>
        <dbReference type="UniProtKB" id="O95396"/>
    </source>
</evidence>
<evidence type="ECO:0000255" key="3">
    <source>
        <dbReference type="HAMAP-Rule" id="MF_03049"/>
    </source>
</evidence>
<evidence type="ECO:0000305" key="4"/>
<gene>
    <name type="primary">mocs3</name>
    <name type="synonym">uba4</name>
    <name type="ORF">zgc:55696</name>
</gene>
<dbReference type="EC" id="2.7.7.80" evidence="3"/>
<dbReference type="EC" id="2.8.1.11" evidence="3"/>
<dbReference type="EMBL" id="BC042324">
    <property type="protein sequence ID" value="AAH42324.1"/>
    <property type="molecule type" value="mRNA"/>
</dbReference>
<dbReference type="EMBL" id="BC071459">
    <property type="protein sequence ID" value="AAH71459.1"/>
    <property type="molecule type" value="mRNA"/>
</dbReference>
<dbReference type="RefSeq" id="NP_956421.1">
    <property type="nucleotide sequence ID" value="NM_200127.1"/>
</dbReference>
<dbReference type="SMR" id="Q8AWD2"/>
<dbReference type="FunCoup" id="Q8AWD2">
    <property type="interactions" value="1068"/>
</dbReference>
<dbReference type="STRING" id="7955.ENSDARP00000013020"/>
<dbReference type="PaxDb" id="7955-ENSDARP00000013020"/>
<dbReference type="GeneID" id="393095"/>
<dbReference type="KEGG" id="dre:393095"/>
<dbReference type="AGR" id="ZFIN:ZDB-GENE-040426-782"/>
<dbReference type="CTD" id="27304"/>
<dbReference type="ZFIN" id="ZDB-GENE-040426-782">
    <property type="gene designation" value="mocs3"/>
</dbReference>
<dbReference type="eggNOG" id="KOG2017">
    <property type="taxonomic scope" value="Eukaryota"/>
</dbReference>
<dbReference type="InParanoid" id="Q8AWD2"/>
<dbReference type="OrthoDB" id="10261062at2759"/>
<dbReference type="PhylomeDB" id="Q8AWD2"/>
<dbReference type="Reactome" id="R-DRE-947581">
    <property type="pathway name" value="Molybdenum cofactor biosynthesis"/>
</dbReference>
<dbReference type="UniPathway" id="UPA00344"/>
<dbReference type="UniPathway" id="UPA00988"/>
<dbReference type="PRO" id="PR:Q8AWD2"/>
<dbReference type="Proteomes" id="UP000000437">
    <property type="component" value="Chromosome 17"/>
</dbReference>
<dbReference type="GO" id="GO:0005737">
    <property type="term" value="C:cytoplasm"/>
    <property type="evidence" value="ECO:0000318"/>
    <property type="project" value="GO_Central"/>
</dbReference>
<dbReference type="GO" id="GO:0005829">
    <property type="term" value="C:cytosol"/>
    <property type="evidence" value="ECO:0000250"/>
    <property type="project" value="UniProtKB"/>
</dbReference>
<dbReference type="GO" id="GO:0005524">
    <property type="term" value="F:ATP binding"/>
    <property type="evidence" value="ECO:0007669"/>
    <property type="project" value="UniProtKB-KW"/>
</dbReference>
<dbReference type="GO" id="GO:0046872">
    <property type="term" value="F:metal ion binding"/>
    <property type="evidence" value="ECO:0007669"/>
    <property type="project" value="UniProtKB-KW"/>
</dbReference>
<dbReference type="GO" id="GO:0061605">
    <property type="term" value="F:molybdopterin-synthase adenylyltransferase activity"/>
    <property type="evidence" value="ECO:0007669"/>
    <property type="project" value="UniProtKB-EC"/>
</dbReference>
<dbReference type="GO" id="GO:0061604">
    <property type="term" value="F:molybdopterin-synthase sulfurtransferase activity"/>
    <property type="evidence" value="ECO:0000250"/>
    <property type="project" value="UniProtKB"/>
</dbReference>
<dbReference type="GO" id="GO:0016779">
    <property type="term" value="F:nucleotidyltransferase activity"/>
    <property type="evidence" value="ECO:0000250"/>
    <property type="project" value="UniProtKB"/>
</dbReference>
<dbReference type="GO" id="GO:0016783">
    <property type="term" value="F:sulfurtransferase activity"/>
    <property type="evidence" value="ECO:0000250"/>
    <property type="project" value="UniProtKB"/>
</dbReference>
<dbReference type="GO" id="GO:0004792">
    <property type="term" value="F:thiosulfate-cyanide sulfurtransferase activity"/>
    <property type="evidence" value="ECO:0000318"/>
    <property type="project" value="GO_Central"/>
</dbReference>
<dbReference type="GO" id="GO:0042292">
    <property type="term" value="F:URM1 activating enzyme activity"/>
    <property type="evidence" value="ECO:0000250"/>
    <property type="project" value="UniProtKB"/>
</dbReference>
<dbReference type="GO" id="GO:0006777">
    <property type="term" value="P:Mo-molybdopterin cofactor biosynthetic process"/>
    <property type="evidence" value="ECO:0000250"/>
    <property type="project" value="UniProtKB"/>
</dbReference>
<dbReference type="GO" id="GO:0032447">
    <property type="term" value="P:protein urmylation"/>
    <property type="evidence" value="ECO:0000318"/>
    <property type="project" value="GO_Central"/>
</dbReference>
<dbReference type="GO" id="GO:0034227">
    <property type="term" value="P:tRNA thio-modification"/>
    <property type="evidence" value="ECO:0000250"/>
    <property type="project" value="UniProtKB"/>
</dbReference>
<dbReference type="GO" id="GO:0002143">
    <property type="term" value="P:tRNA wobble position uridine thiolation"/>
    <property type="evidence" value="ECO:0000318"/>
    <property type="project" value="GO_Central"/>
</dbReference>
<dbReference type="GO" id="GO:0002098">
    <property type="term" value="P:tRNA wobble uridine modification"/>
    <property type="evidence" value="ECO:0000250"/>
    <property type="project" value="UniProtKB"/>
</dbReference>
<dbReference type="CDD" id="cd01526">
    <property type="entry name" value="RHOD_ThiF"/>
    <property type="match status" value="1"/>
</dbReference>
<dbReference type="CDD" id="cd00757">
    <property type="entry name" value="ThiF_MoeB_HesA_family"/>
    <property type="match status" value="1"/>
</dbReference>
<dbReference type="FunFam" id="3.40.250.10:FF:000014">
    <property type="entry name" value="Adenylyltransferase and sulfurtransferase MOCS3"/>
    <property type="match status" value="1"/>
</dbReference>
<dbReference type="FunFam" id="3.40.50.720:FF:000206">
    <property type="entry name" value="Adenylyltransferase and sulfurtransferase MOCS3"/>
    <property type="match status" value="1"/>
</dbReference>
<dbReference type="Gene3D" id="3.40.50.720">
    <property type="entry name" value="NAD(P)-binding Rossmann-like Domain"/>
    <property type="match status" value="1"/>
</dbReference>
<dbReference type="Gene3D" id="3.40.250.10">
    <property type="entry name" value="Rhodanese-like domain"/>
    <property type="match status" value="1"/>
</dbReference>
<dbReference type="HAMAP" id="MF_03049">
    <property type="entry name" value="MOCS3_Uba4"/>
    <property type="match status" value="1"/>
</dbReference>
<dbReference type="InterPro" id="IPR028885">
    <property type="entry name" value="MOCS3/Uba4"/>
</dbReference>
<dbReference type="InterPro" id="IPR001763">
    <property type="entry name" value="Rhodanese-like_dom"/>
</dbReference>
<dbReference type="InterPro" id="IPR036873">
    <property type="entry name" value="Rhodanese-like_dom_sf"/>
</dbReference>
<dbReference type="InterPro" id="IPR045886">
    <property type="entry name" value="ThiF/MoeB/HesA"/>
</dbReference>
<dbReference type="InterPro" id="IPR000594">
    <property type="entry name" value="ThiF_NAD_FAD-bd"/>
</dbReference>
<dbReference type="InterPro" id="IPR035985">
    <property type="entry name" value="Ubiquitin-activating_enz"/>
</dbReference>
<dbReference type="NCBIfam" id="NF004281">
    <property type="entry name" value="PRK05690.1"/>
    <property type="match status" value="1"/>
</dbReference>
<dbReference type="PANTHER" id="PTHR10953:SF102">
    <property type="entry name" value="ADENYLYLTRANSFERASE AND SULFURTRANSFERASE MOCS3"/>
    <property type="match status" value="1"/>
</dbReference>
<dbReference type="PANTHER" id="PTHR10953">
    <property type="entry name" value="UBIQUITIN-ACTIVATING ENZYME E1"/>
    <property type="match status" value="1"/>
</dbReference>
<dbReference type="Pfam" id="PF00581">
    <property type="entry name" value="Rhodanese"/>
    <property type="match status" value="1"/>
</dbReference>
<dbReference type="Pfam" id="PF00899">
    <property type="entry name" value="ThiF"/>
    <property type="match status" value="1"/>
</dbReference>
<dbReference type="SMART" id="SM00450">
    <property type="entry name" value="RHOD"/>
    <property type="match status" value="1"/>
</dbReference>
<dbReference type="SUPFAM" id="SSF69572">
    <property type="entry name" value="Activating enzymes of the ubiquitin-like proteins"/>
    <property type="match status" value="1"/>
</dbReference>
<dbReference type="PROSITE" id="PS50206">
    <property type="entry name" value="RHODANESE_3"/>
    <property type="match status" value="1"/>
</dbReference>
<comment type="function">
    <text evidence="1">Plays a central role in 2-thiolation of mcm(5)S(2)U at tRNA wobble positions of cytosolic tRNA(Lys), tRNA(Glu) and tRNA(Gln). Also essential during biosynthesis of the molybdenum cofactor. Acts by mediating the C-terminal thiocarboxylation of sulfur carriers urm1 and mocs2a. Its N-terminus first activates urm1 and mocs2a as acyl-adenylates (-COAMP), then the persulfide sulfur on the catalytic cysteine is transferred to urm1 and mocs2a to form thiocarboxylation (-COSH) of their C-terminus. The reaction probably involves hydrogen sulfide that is generated from the persulfide intermediate and that acts as a nucleophile towards urm1 and mocs2a. Subsequently, a transient disulfide bond is formed. Does not use thiosulfate as sulfur donor; nfs1 probably acting as a sulfur donor for thiocarboxylation reactions (By similarity).</text>
</comment>
<comment type="catalytic activity">
    <reaction evidence="3">
        <text>[molybdopterin-synthase sulfur-carrier protein]-C-terminal Gly-Gly + ATP + H(+) = [molybdopterin-synthase sulfur-carrier protein]-C-terminal Gly-Gly-AMP + diphosphate</text>
        <dbReference type="Rhea" id="RHEA:43616"/>
        <dbReference type="Rhea" id="RHEA-COMP:12159"/>
        <dbReference type="Rhea" id="RHEA-COMP:12202"/>
        <dbReference type="ChEBI" id="CHEBI:15378"/>
        <dbReference type="ChEBI" id="CHEBI:30616"/>
        <dbReference type="ChEBI" id="CHEBI:33019"/>
        <dbReference type="ChEBI" id="CHEBI:90618"/>
        <dbReference type="ChEBI" id="CHEBI:90778"/>
        <dbReference type="EC" id="2.7.7.80"/>
    </reaction>
</comment>
<comment type="catalytic activity">
    <reaction evidence="3">
        <text>[molybdopterin-synthase sulfur-carrier protein]-C-terminal Gly-Gly-AMP + S-sulfanyl-L-cysteinyl-[cysteine desulfurase] + AH2 = [molybdopterin-synthase sulfur-carrier protein]-C-terminal-Gly-aminoethanethioate + L-cysteinyl-[cysteine desulfurase] + A + AMP + 2 H(+)</text>
        <dbReference type="Rhea" id="RHEA:48612"/>
        <dbReference type="Rhea" id="RHEA-COMP:12157"/>
        <dbReference type="Rhea" id="RHEA-COMP:12158"/>
        <dbReference type="Rhea" id="RHEA-COMP:12159"/>
        <dbReference type="Rhea" id="RHEA-COMP:19907"/>
        <dbReference type="ChEBI" id="CHEBI:13193"/>
        <dbReference type="ChEBI" id="CHEBI:15378"/>
        <dbReference type="ChEBI" id="CHEBI:17499"/>
        <dbReference type="ChEBI" id="CHEBI:29950"/>
        <dbReference type="ChEBI" id="CHEBI:61963"/>
        <dbReference type="ChEBI" id="CHEBI:90618"/>
        <dbReference type="ChEBI" id="CHEBI:232372"/>
        <dbReference type="ChEBI" id="CHEBI:456215"/>
        <dbReference type="EC" id="2.8.1.11"/>
    </reaction>
</comment>
<comment type="cofactor">
    <cofactor evidence="3">
        <name>Zn(2+)</name>
        <dbReference type="ChEBI" id="CHEBI:29105"/>
    </cofactor>
    <text evidence="3">Binds 1 zinc ion per subunit.</text>
</comment>
<comment type="pathway">
    <text evidence="3">tRNA modification; 5-methoxycarbonylmethyl-2-thiouridine-tRNA biosynthesis.</text>
</comment>
<comment type="pathway">
    <text evidence="3">Cofactor biosynthesis; molybdopterin biosynthesis.</text>
</comment>
<comment type="subcellular location">
    <subcellularLocation>
        <location evidence="2">Cytoplasm</location>
        <location evidence="2">Cytosol</location>
    </subcellularLocation>
</comment>
<comment type="similarity">
    <text evidence="3">In the N-terminal section; belongs to the HesA/MoeB/ThiF family. UBA4 subfamily.</text>
</comment>
<name>MOCS3_DANRE</name>
<accession>Q8AWD2</accession>
<accession>Q6IQE7</accession>
<sequence length="459" mass="50798">MDDTIVSLKSQLLEREREVATLKKKLDQIEKGNSTLPELQEKVTSLSPLRLNTSLNNDDIMRYSRQLLLPELGVKGQIAISNISVLVVGCGGLGCPLAQYLAAAGIGRLGLLDYDVVELSNLHRQVLHTELTQGQPKALSAAQAISRMNSTVQCVPYHLQLSRENAIQLIQQYDIVADCSDNVPTRYLVNDACVLTSRPLVSASALRMEGQLTVYNYRGGPCYRCLYPIPPPPETVTNCSDGGVLGVVPGIMGCLQALEVLKIASGQECSFAQQLLMFDGEQTRFRSIRLRSRQKECVVCGEKPTITELQDYEHFCGSAATDKCRRLHLLSREQRVSVQDYKGILDHSTPHLLLDVRPKVEVDICRLSNSLHIPLASLEDKKPEHITLLKEAISDLQEHLNNQSPVQVFVVCKLGNDSQKAVQLLEKMSGAEVEAMTVKDIGGGLMAWAKKIDYCFPQY</sequence>
<keyword id="KW-0067">ATP-binding</keyword>
<keyword id="KW-0963">Cytoplasm</keyword>
<keyword id="KW-1015">Disulfide bond</keyword>
<keyword id="KW-0479">Metal-binding</keyword>
<keyword id="KW-0501">Molybdenum cofactor biosynthesis</keyword>
<keyword id="KW-0511">Multifunctional enzyme</keyword>
<keyword id="KW-0547">Nucleotide-binding</keyword>
<keyword id="KW-0548">Nucleotidyltransferase</keyword>
<keyword id="KW-1185">Reference proteome</keyword>
<keyword id="KW-0808">Transferase</keyword>
<keyword id="KW-0819">tRNA processing</keyword>
<keyword id="KW-0862">Zinc</keyword>